<proteinExistence type="inferred from homology"/>
<reference key="1">
    <citation type="journal article" date="2008" name="J. Bacteriol.">
        <title>The complete genome sequence of Escherichia coli DH10B: insights into the biology of a laboratory workhorse.</title>
        <authorList>
            <person name="Durfee T."/>
            <person name="Nelson R."/>
            <person name="Baldwin S."/>
            <person name="Plunkett G. III"/>
            <person name="Burland V."/>
            <person name="Mau B."/>
            <person name="Petrosino J.F."/>
            <person name="Qin X."/>
            <person name="Muzny D.M."/>
            <person name="Ayele M."/>
            <person name="Gibbs R.A."/>
            <person name="Csorgo B."/>
            <person name="Posfai G."/>
            <person name="Weinstock G.M."/>
            <person name="Blattner F.R."/>
        </authorList>
    </citation>
    <scope>NUCLEOTIDE SEQUENCE [LARGE SCALE GENOMIC DNA]</scope>
    <source>
        <strain>K12 / DH10B</strain>
    </source>
</reference>
<dbReference type="EC" id="4.1.2.53" evidence="1"/>
<dbReference type="EMBL" id="CP000948">
    <property type="protein sequence ID" value="ACB03405.1"/>
    <property type="molecule type" value="Genomic_DNA"/>
</dbReference>
<dbReference type="SMR" id="B1X8V8"/>
<dbReference type="KEGG" id="ecd:ECDH10B_2405"/>
<dbReference type="HOGENOM" id="CLU_059964_1_0_6"/>
<dbReference type="GO" id="GO:0005737">
    <property type="term" value="C:cytoplasm"/>
    <property type="evidence" value="ECO:0007669"/>
    <property type="project" value="TreeGrafter"/>
</dbReference>
<dbReference type="GO" id="GO:0106099">
    <property type="term" value="F:2-keto-3-deoxy-L-rhamnonate aldolase activity"/>
    <property type="evidence" value="ECO:0007669"/>
    <property type="project" value="UniProtKB-EC"/>
</dbReference>
<dbReference type="GO" id="GO:0000287">
    <property type="term" value="F:magnesium ion binding"/>
    <property type="evidence" value="ECO:0007669"/>
    <property type="project" value="UniProtKB-UniRule"/>
</dbReference>
<dbReference type="FunFam" id="3.20.20.60:FF:000004">
    <property type="entry name" value="5-keto-4-deoxy-D-glucarate aldolase"/>
    <property type="match status" value="1"/>
</dbReference>
<dbReference type="Gene3D" id="3.20.20.60">
    <property type="entry name" value="Phosphoenolpyruvate-binding domains"/>
    <property type="match status" value="1"/>
</dbReference>
<dbReference type="HAMAP" id="MF_01290">
    <property type="entry name" value="KDR_aldolase"/>
    <property type="match status" value="1"/>
</dbReference>
<dbReference type="InterPro" id="IPR005000">
    <property type="entry name" value="Aldolase/citrate-lyase_domain"/>
</dbReference>
<dbReference type="InterPro" id="IPR050251">
    <property type="entry name" value="HpcH-HpaI_aldolase"/>
</dbReference>
<dbReference type="InterPro" id="IPR023593">
    <property type="entry name" value="KDR_aldolase"/>
</dbReference>
<dbReference type="InterPro" id="IPR015813">
    <property type="entry name" value="Pyrv/PenolPyrv_kinase-like_dom"/>
</dbReference>
<dbReference type="InterPro" id="IPR040442">
    <property type="entry name" value="Pyrv_kinase-like_dom_sf"/>
</dbReference>
<dbReference type="NCBIfam" id="NF007521">
    <property type="entry name" value="PRK10128.1"/>
    <property type="match status" value="1"/>
</dbReference>
<dbReference type="PANTHER" id="PTHR30502">
    <property type="entry name" value="2-KETO-3-DEOXY-L-RHAMNONATE ALDOLASE"/>
    <property type="match status" value="1"/>
</dbReference>
<dbReference type="PANTHER" id="PTHR30502:SF5">
    <property type="entry name" value="2-KETO-3-DEOXY-L-RHAMNONATE ALDOLASE"/>
    <property type="match status" value="1"/>
</dbReference>
<dbReference type="Pfam" id="PF03328">
    <property type="entry name" value="HpcH_HpaI"/>
    <property type="match status" value="1"/>
</dbReference>
<dbReference type="SUPFAM" id="SSF51621">
    <property type="entry name" value="Phosphoenolpyruvate/pyruvate domain"/>
    <property type="match status" value="1"/>
</dbReference>
<feature type="chain" id="PRO_0000353164" description="2-keto-3-deoxy-L-rhamnonate aldolase">
    <location>
        <begin position="1"/>
        <end position="267"/>
    </location>
</feature>
<feature type="active site" description="Proton acceptor" evidence="1">
    <location>
        <position position="49"/>
    </location>
</feature>
<feature type="binding site" evidence="1">
    <location>
        <position position="151"/>
    </location>
    <ligand>
        <name>substrate</name>
    </ligand>
</feature>
<feature type="binding site" evidence="1">
    <location>
        <position position="153"/>
    </location>
    <ligand>
        <name>Mg(2+)</name>
        <dbReference type="ChEBI" id="CHEBI:18420"/>
    </ligand>
</feature>
<feature type="binding site" evidence="1">
    <location>
        <position position="178"/>
    </location>
    <ligand>
        <name>substrate</name>
    </ligand>
</feature>
<feature type="binding site" evidence="1">
    <location>
        <position position="179"/>
    </location>
    <ligand>
        <name>Mg(2+)</name>
        <dbReference type="ChEBI" id="CHEBI:18420"/>
    </ligand>
</feature>
<feature type="binding site" evidence="1">
    <location>
        <position position="179"/>
    </location>
    <ligand>
        <name>substrate</name>
    </ligand>
</feature>
<feature type="site" description="Transition state stabilizer" evidence="1">
    <location>
        <position position="74"/>
    </location>
</feature>
<feature type="site" description="Increases basicity of active site His" evidence="1">
    <location>
        <position position="88"/>
    </location>
</feature>
<protein>
    <recommendedName>
        <fullName evidence="1">2-keto-3-deoxy-L-rhamnonate aldolase</fullName>
        <shortName evidence="1">KDR aldolase</shortName>
        <ecNumber evidence="1">4.1.2.53</ecNumber>
    </recommendedName>
    <alternativeName>
        <fullName evidence="1">2-dehydro-3-deoxyrhamnonate aldolase</fullName>
    </alternativeName>
</protein>
<gene>
    <name evidence="1" type="primary">rhmA</name>
    <name type="ordered locus">ECDH10B_2405</name>
</gene>
<organism>
    <name type="scientific">Escherichia coli (strain K12 / DH10B)</name>
    <dbReference type="NCBI Taxonomy" id="316385"/>
    <lineage>
        <taxon>Bacteria</taxon>
        <taxon>Pseudomonadati</taxon>
        <taxon>Pseudomonadota</taxon>
        <taxon>Gammaproteobacteria</taxon>
        <taxon>Enterobacterales</taxon>
        <taxon>Enterobacteriaceae</taxon>
        <taxon>Escherichia</taxon>
    </lineage>
</organism>
<name>RHMA_ECODH</name>
<accession>B1X8V8</accession>
<evidence type="ECO:0000255" key="1">
    <source>
        <dbReference type="HAMAP-Rule" id="MF_01290"/>
    </source>
</evidence>
<comment type="function">
    <text evidence="1">Catalyzes the reversible retro-aldol cleavage of 2-keto-3-deoxy-L-rhamnonate (KDR) to pyruvate and lactaldehyde.</text>
</comment>
<comment type="catalytic activity">
    <reaction evidence="1">
        <text>2-dehydro-3-deoxy-L-rhamnonate = (S)-lactaldehyde + pyruvate</text>
        <dbReference type="Rhea" id="RHEA:25784"/>
        <dbReference type="ChEBI" id="CHEBI:15361"/>
        <dbReference type="ChEBI" id="CHEBI:18041"/>
        <dbReference type="ChEBI" id="CHEBI:58371"/>
        <dbReference type="EC" id="4.1.2.53"/>
    </reaction>
</comment>
<comment type="cofactor">
    <cofactor evidence="1">
        <name>Mg(2+)</name>
        <dbReference type="ChEBI" id="CHEBI:18420"/>
    </cofactor>
    <text evidence="1">Binds 1 Mg(2+) ion per subunit.</text>
</comment>
<comment type="subunit">
    <text evidence="1">Homohexamer.</text>
</comment>
<comment type="similarity">
    <text evidence="1">Belongs to the HpcH/HpaI aldolase family. KDR aldolase subfamily.</text>
</comment>
<keyword id="KW-0456">Lyase</keyword>
<keyword id="KW-0460">Magnesium</keyword>
<keyword id="KW-0479">Metal-binding</keyword>
<sequence length="267" mass="28916">MNALLSNPFKERLRKGEVQIGLWLSSTTAYMAEIAATSGYDWLLIDGEHAPNTIQDLYHQLQAVAPYASQPVIRPVEGSKPLIKQVLDIGAQTLLIPMVDTAEQARQVVSATRYPPYGERGVGASVARAARWGRIENYMAQVNDSLCLLVQVESKTALDNLDEILDVEGIDGVFIGPADLSASLGYPDNAGHPEVQRIIETSIRRIRAAGKAAGFLAVAPDMAQQCLAWGANFVAVGVDTMLYSDALDQRLAMFKSGKNGPRIKGSY</sequence>